<proteinExistence type="evidence at protein level"/>
<organism>
    <name type="scientific">Arabidopsis thaliana</name>
    <name type="common">Mouse-ear cress</name>
    <dbReference type="NCBI Taxonomy" id="3702"/>
    <lineage>
        <taxon>Eukaryota</taxon>
        <taxon>Viridiplantae</taxon>
        <taxon>Streptophyta</taxon>
        <taxon>Embryophyta</taxon>
        <taxon>Tracheophyta</taxon>
        <taxon>Spermatophyta</taxon>
        <taxon>Magnoliopsida</taxon>
        <taxon>eudicotyledons</taxon>
        <taxon>Gunneridae</taxon>
        <taxon>Pentapetalae</taxon>
        <taxon>rosids</taxon>
        <taxon>malvids</taxon>
        <taxon>Brassicales</taxon>
        <taxon>Brassicaceae</taxon>
        <taxon>Camelineae</taxon>
        <taxon>Arabidopsis</taxon>
    </lineage>
</organism>
<protein>
    <recommendedName>
        <fullName>Monocopper oxidase-like protein SKU5</fullName>
    </recommendedName>
    <alternativeName>
        <fullName>Skewed roots</fullName>
    </alternativeName>
</protein>
<dbReference type="EMBL" id="AF439406">
    <property type="protein sequence ID" value="AAL62306.1"/>
    <property type="molecule type" value="mRNA"/>
</dbReference>
<dbReference type="EMBL" id="AL049730">
    <property type="protein sequence ID" value="CAB41712.1"/>
    <property type="molecule type" value="Genomic_DNA"/>
</dbReference>
<dbReference type="EMBL" id="AL161534">
    <property type="protein sequence ID" value="CAB78285.1"/>
    <property type="molecule type" value="Genomic_DNA"/>
</dbReference>
<dbReference type="EMBL" id="CP002687">
    <property type="protein sequence ID" value="AEE83128.1"/>
    <property type="molecule type" value="Genomic_DNA"/>
</dbReference>
<dbReference type="EMBL" id="CP002687">
    <property type="protein sequence ID" value="AEE83129.1"/>
    <property type="molecule type" value="Genomic_DNA"/>
</dbReference>
<dbReference type="EMBL" id="AF083740">
    <property type="protein sequence ID" value="AAN60298.1"/>
    <property type="molecule type" value="mRNA"/>
</dbReference>
<dbReference type="EMBL" id="AK229975">
    <property type="protein sequence ID" value="BAF01800.1"/>
    <property type="molecule type" value="mRNA"/>
</dbReference>
<dbReference type="PIR" id="T07634">
    <property type="entry name" value="T07634"/>
</dbReference>
<dbReference type="RefSeq" id="NP_001190704.1">
    <property type="nucleotide sequence ID" value="NM_001203775.2"/>
</dbReference>
<dbReference type="RefSeq" id="NP_192979.1">
    <property type="nucleotide sequence ID" value="NM_117312.4"/>
</dbReference>
<dbReference type="SMR" id="Q9SU40"/>
<dbReference type="BioGRID" id="12149">
    <property type="interactions" value="3"/>
</dbReference>
<dbReference type="FunCoup" id="Q9SU40">
    <property type="interactions" value="539"/>
</dbReference>
<dbReference type="STRING" id="3702.Q9SU40"/>
<dbReference type="GlyCosmos" id="Q9SU40">
    <property type="glycosylation" value="13 sites, No reported glycans"/>
</dbReference>
<dbReference type="GlyGen" id="Q9SU40">
    <property type="glycosylation" value="13 sites"/>
</dbReference>
<dbReference type="iPTMnet" id="Q9SU40"/>
<dbReference type="PaxDb" id="3702-AT4G12420.2"/>
<dbReference type="ProteomicsDB" id="232592"/>
<dbReference type="EnsemblPlants" id="AT4G12420.1">
    <property type="protein sequence ID" value="AT4G12420.1"/>
    <property type="gene ID" value="AT4G12420"/>
</dbReference>
<dbReference type="EnsemblPlants" id="AT4G12420.2">
    <property type="protein sequence ID" value="AT4G12420.2"/>
    <property type="gene ID" value="AT4G12420"/>
</dbReference>
<dbReference type="GeneID" id="826851"/>
<dbReference type="Gramene" id="AT4G12420.1">
    <property type="protein sequence ID" value="AT4G12420.1"/>
    <property type="gene ID" value="AT4G12420"/>
</dbReference>
<dbReference type="Gramene" id="AT4G12420.2">
    <property type="protein sequence ID" value="AT4G12420.2"/>
    <property type="gene ID" value="AT4G12420"/>
</dbReference>
<dbReference type="KEGG" id="ath:AT4G12420"/>
<dbReference type="Araport" id="AT4G12420"/>
<dbReference type="TAIR" id="AT4G12420">
    <property type="gene designation" value="SKU5"/>
</dbReference>
<dbReference type="eggNOG" id="KOG1263">
    <property type="taxonomic scope" value="Eukaryota"/>
</dbReference>
<dbReference type="HOGENOM" id="CLU_022744_2_1_1"/>
<dbReference type="InParanoid" id="Q9SU40"/>
<dbReference type="OMA" id="KNHTHLR"/>
<dbReference type="OrthoDB" id="2121828at2759"/>
<dbReference type="PhylomeDB" id="Q9SU40"/>
<dbReference type="CD-CODE" id="4299E36E">
    <property type="entry name" value="Nucleolus"/>
</dbReference>
<dbReference type="PRO" id="PR:Q9SU40"/>
<dbReference type="Proteomes" id="UP000006548">
    <property type="component" value="Chromosome 4"/>
</dbReference>
<dbReference type="ExpressionAtlas" id="Q9SU40">
    <property type="expression patterns" value="baseline and differential"/>
</dbReference>
<dbReference type="GO" id="GO:0048046">
    <property type="term" value="C:apoplast"/>
    <property type="evidence" value="ECO:0007005"/>
    <property type="project" value="TAIR"/>
</dbReference>
<dbReference type="GO" id="GO:0005829">
    <property type="term" value="C:cytosol"/>
    <property type="evidence" value="ECO:0007005"/>
    <property type="project" value="TAIR"/>
</dbReference>
<dbReference type="GO" id="GO:0009505">
    <property type="term" value="C:plant-type cell wall"/>
    <property type="evidence" value="ECO:0000314"/>
    <property type="project" value="TAIR"/>
</dbReference>
<dbReference type="GO" id="GO:0000325">
    <property type="term" value="C:plant-type vacuole"/>
    <property type="evidence" value="ECO:0007005"/>
    <property type="project" value="TAIR"/>
</dbReference>
<dbReference type="GO" id="GO:0005886">
    <property type="term" value="C:plasma membrane"/>
    <property type="evidence" value="ECO:0000314"/>
    <property type="project" value="TAIR"/>
</dbReference>
<dbReference type="GO" id="GO:0009506">
    <property type="term" value="C:plasmodesma"/>
    <property type="evidence" value="ECO:0007005"/>
    <property type="project" value="TAIR"/>
</dbReference>
<dbReference type="GO" id="GO:0098552">
    <property type="term" value="C:side of membrane"/>
    <property type="evidence" value="ECO:0007669"/>
    <property type="project" value="UniProtKB-KW"/>
</dbReference>
<dbReference type="GO" id="GO:0005507">
    <property type="term" value="F:copper ion binding"/>
    <property type="evidence" value="ECO:0007669"/>
    <property type="project" value="InterPro"/>
</dbReference>
<dbReference type="GO" id="GO:0016491">
    <property type="term" value="F:oxidoreductase activity"/>
    <property type="evidence" value="ECO:0007669"/>
    <property type="project" value="InterPro"/>
</dbReference>
<dbReference type="GO" id="GO:0009932">
    <property type="term" value="P:cell tip growth"/>
    <property type="evidence" value="ECO:0000315"/>
    <property type="project" value="TAIR"/>
</dbReference>
<dbReference type="CDD" id="cd13846">
    <property type="entry name" value="CuRO_1_AAO_like_1"/>
    <property type="match status" value="1"/>
</dbReference>
<dbReference type="FunFam" id="2.60.40.420:FF:000012">
    <property type="entry name" value="Monocopper oxidase-like protein"/>
    <property type="match status" value="1"/>
</dbReference>
<dbReference type="FunFam" id="2.60.40.420:FF:000016">
    <property type="entry name" value="Monocopper oxidase-like protein"/>
    <property type="match status" value="1"/>
</dbReference>
<dbReference type="FunFam" id="2.60.40.420:FF:000023">
    <property type="entry name" value="Monocopper oxidase-like protein SKU5"/>
    <property type="match status" value="1"/>
</dbReference>
<dbReference type="Gene3D" id="2.60.40.420">
    <property type="entry name" value="Cupredoxins - blue copper proteins"/>
    <property type="match status" value="3"/>
</dbReference>
<dbReference type="InterPro" id="IPR011707">
    <property type="entry name" value="Cu-oxidase-like_N"/>
</dbReference>
<dbReference type="InterPro" id="IPR001117">
    <property type="entry name" value="Cu-oxidase_2nd"/>
</dbReference>
<dbReference type="InterPro" id="IPR011706">
    <property type="entry name" value="Cu-oxidase_C"/>
</dbReference>
<dbReference type="InterPro" id="IPR045087">
    <property type="entry name" value="Cu-oxidase_fam"/>
</dbReference>
<dbReference type="InterPro" id="IPR008972">
    <property type="entry name" value="Cupredoxin"/>
</dbReference>
<dbReference type="InterPro" id="IPR034273">
    <property type="entry name" value="CuRO_1_AAO-like"/>
</dbReference>
<dbReference type="PANTHER" id="PTHR11709:SF123">
    <property type="entry name" value="MONOCOPPER OXIDASE-LIKE PROTEIN SKU5"/>
    <property type="match status" value="1"/>
</dbReference>
<dbReference type="PANTHER" id="PTHR11709">
    <property type="entry name" value="MULTI-COPPER OXIDASE"/>
    <property type="match status" value="1"/>
</dbReference>
<dbReference type="Pfam" id="PF00394">
    <property type="entry name" value="Cu-oxidase"/>
    <property type="match status" value="1"/>
</dbReference>
<dbReference type="Pfam" id="PF07731">
    <property type="entry name" value="Cu-oxidase_2"/>
    <property type="match status" value="1"/>
</dbReference>
<dbReference type="Pfam" id="PF07732">
    <property type="entry name" value="Cu-oxidase_3"/>
    <property type="match status" value="1"/>
</dbReference>
<dbReference type="SUPFAM" id="SSF49503">
    <property type="entry name" value="Cupredoxins"/>
    <property type="match status" value="3"/>
</dbReference>
<gene>
    <name type="primary">SKU5</name>
    <name type="ordered locus">At4g12420</name>
    <name type="ORF">T1P17.10</name>
</gene>
<sequence length="587" mass="65638">MDLFKILLLVFFVNISFCFAADPYSFYNFEVSYITASPLGVPQQVIAINGKFPGPTINVTTNENLVVNVRNKLDEGLLLHWNGIQQRRVSWQDGVLGTNCPIPPKWNWTYEFQVKDQIGSFFYFPSLHFQRASGGFGSFVVNPRAIIPVPFSTPDGDITVTIGDWYIRNHTALRKALDDGKDLGMPDGVLINGKGPYRYNDTLVADGIDFETITVHPGKTYRLRVSNVGISTSLNFRIQGHNLVLAESEGSYTVQQNYTSLDIHVGQSYSFLVTMDQNASSDYYIVASARVVNETIWRRVTGVGILKYTNSKGKAKGQLPPGPQDEFDKTFSMNQARSIRWNVSASGARPNPQGSFKYGSINVTDVYVLRNMPPVTISGKRRTTLNGISFKNPSTPIRLADKLKVKDVYKLDFPKRPLTGPAKVATSIINGTYRGFMEVVLQNNDTKMQSYHMSGYAFFVVGMDYGEWTENSRGTYNKWDGIARSTIQVYPGAWSAILISLDNPGAWNLRTENLDSWYLGQETYVRVVNPDENNKTEFGHPDNVLYCGALSKLQKPQKVSSSASKSIGFTSLSMVVMALVMMMMLQH</sequence>
<keyword id="KW-1003">Cell membrane</keyword>
<keyword id="KW-0134">Cell wall</keyword>
<keyword id="KW-0186">Copper</keyword>
<keyword id="KW-0903">Direct protein sequencing</keyword>
<keyword id="KW-0325">Glycoprotein</keyword>
<keyword id="KW-0336">GPI-anchor</keyword>
<keyword id="KW-0449">Lipoprotein</keyword>
<keyword id="KW-0472">Membrane</keyword>
<keyword id="KW-0479">Metal-binding</keyword>
<keyword id="KW-1185">Reference proteome</keyword>
<keyword id="KW-0964">Secreted</keyword>
<keyword id="KW-0732">Signal</keyword>
<comment type="function">
    <text>May be a monocopper oxidase of unknown specificity. Involved in directional growth processes, possibly by participating in cell wall expansion.</text>
</comment>
<comment type="cofactor">
    <cofactor evidence="5">
        <name>Cu cation</name>
        <dbReference type="ChEBI" id="CHEBI:23378"/>
    </cofactor>
</comment>
<comment type="subcellular location">
    <subcellularLocation>
        <location evidence="3">Secreted</location>
        <location evidence="3">Cell wall</location>
    </subcellularLocation>
    <subcellularLocation>
        <location evidence="3 4">Cell membrane</location>
        <topology evidence="3">Lipid-anchor</topology>
        <topology evidence="3">GPI-anchor</topology>
        <orientation evidence="3">Extracellular side</orientation>
    </subcellularLocation>
    <text>Partially soluble and located in the cell wall.</text>
</comment>
<comment type="tissue specificity">
    <text evidence="3">Expressed in roots, hypocotyls, cotyledons, leaves, stems and flowers.</text>
</comment>
<comment type="similarity">
    <text evidence="5">Belongs to the multicopper oxidase family.</text>
</comment>
<accession>Q9SU40</accession>
<accession>Q0WM56</accession>
<accession>Q8H7C9</accession>
<feature type="signal peptide" evidence="3">
    <location>
        <begin position="1"/>
        <end position="20"/>
    </location>
</feature>
<feature type="chain" id="PRO_0000002961" description="Monocopper oxidase-like protein SKU5">
    <location>
        <begin position="21"/>
        <end position="562"/>
    </location>
</feature>
<feature type="propeptide" id="PRO_0000002962" description="Removed in mature form" evidence="2">
    <location>
        <begin position="563"/>
        <end position="587"/>
    </location>
</feature>
<feature type="binding site" description="type 2 copper site" evidence="1">
    <location>
        <position position="80"/>
    </location>
    <ligand>
        <name>Cu cation</name>
        <dbReference type="ChEBI" id="CHEBI:23378"/>
        <label>2</label>
    </ligand>
</feature>
<feature type="binding site" description="type 2 copper site" evidence="1">
    <location>
        <position position="452"/>
    </location>
    <ligand>
        <name>Cu cation</name>
        <dbReference type="ChEBI" id="CHEBI:23378"/>
        <label>2</label>
    </ligand>
</feature>
<feature type="lipid moiety-binding region" description="GPI-anchor amidated serine" evidence="2">
    <location>
        <position position="562"/>
    </location>
</feature>
<feature type="glycosylation site" description="N-linked (GlcNAc...) asparagine" evidence="2">
    <location>
        <position position="14"/>
    </location>
</feature>
<feature type="glycosylation site" description="N-linked (GlcNAc...) asparagine" evidence="2">
    <location>
        <position position="58"/>
    </location>
</feature>
<feature type="glycosylation site" description="N-linked (GlcNAc...) asparagine" evidence="2">
    <location>
        <position position="107"/>
    </location>
</feature>
<feature type="glycosylation site" description="N-linked (GlcNAc...) asparagine" evidence="2">
    <location>
        <position position="169"/>
    </location>
</feature>
<feature type="glycosylation site" description="N-linked (GlcNAc...) asparagine" evidence="2">
    <location>
        <position position="200"/>
    </location>
</feature>
<feature type="glycosylation site" description="N-linked (GlcNAc...) asparagine" evidence="2">
    <location>
        <position position="257"/>
    </location>
</feature>
<feature type="glycosylation site" description="N-linked (GlcNAc...) asparagine" evidence="2">
    <location>
        <position position="278"/>
    </location>
</feature>
<feature type="glycosylation site" description="N-linked (GlcNAc...) asparagine" evidence="2">
    <location>
        <position position="293"/>
    </location>
</feature>
<feature type="glycosylation site" description="N-linked (GlcNAc...) asparagine" evidence="2">
    <location>
        <position position="342"/>
    </location>
</feature>
<feature type="glycosylation site" description="N-linked (GlcNAc...) asparagine" evidence="2">
    <location>
        <position position="362"/>
    </location>
</feature>
<feature type="glycosylation site" description="N-linked (GlcNAc...) asparagine" evidence="2">
    <location>
        <position position="430"/>
    </location>
</feature>
<feature type="glycosylation site" description="N-linked (GlcNAc...) asparagine" evidence="2">
    <location>
        <position position="444"/>
    </location>
</feature>
<feature type="glycosylation site" description="N-linked (GlcNAc...) asparagine" evidence="2">
    <location>
        <position position="534"/>
    </location>
</feature>
<feature type="sequence conflict" description="In Ref. 4; AAN60298." evidence="5" ref="4">
    <original>IAI</original>
    <variation>MAM</variation>
    <location>
        <begin position="46"/>
        <end position="48"/>
    </location>
</feature>
<feature type="sequence conflict" description="In Ref. 4; AAN60298." evidence="5" ref="4">
    <original>F</original>
    <variation>V</variation>
    <location>
        <position position="139"/>
    </location>
</feature>
<evidence type="ECO:0000250" key="1"/>
<evidence type="ECO:0000255" key="2"/>
<evidence type="ECO:0000269" key="3">
    <source>
    </source>
</evidence>
<evidence type="ECO:0000269" key="4">
    <source>
    </source>
</evidence>
<evidence type="ECO:0000305" key="5"/>
<reference key="1">
    <citation type="journal article" date="2002" name="Plant Cell">
        <title>The Arabidopsis SKU5 gene encodes an extracellular glycosyl phosphatidylinositol-anchored glycoprotein involved in directional root growth.</title>
        <authorList>
            <person name="Sedbrook J.C."/>
            <person name="Carroll K.L."/>
            <person name="Hung K.F."/>
            <person name="Masson P.H."/>
            <person name="Somerville C.R."/>
        </authorList>
    </citation>
    <scope>NUCLEOTIDE SEQUENCE [MRNA]</scope>
    <scope>PROTEIN SEQUENCE OF 21-35</scope>
    <scope>TISSUE SPECIFICITY</scope>
    <scope>SUBCELLULAR LOCATION</scope>
    <scope>GLYCOSYLATION</scope>
    <scope>GPI-ANCHOR</scope>
    <source>
        <strain>cv. Columbia</strain>
    </source>
</reference>
<reference key="2">
    <citation type="journal article" date="1999" name="Nature">
        <title>Sequence and analysis of chromosome 4 of the plant Arabidopsis thaliana.</title>
        <authorList>
            <person name="Mayer K.F.X."/>
            <person name="Schueller C."/>
            <person name="Wambutt R."/>
            <person name="Murphy G."/>
            <person name="Volckaert G."/>
            <person name="Pohl T."/>
            <person name="Duesterhoeft A."/>
            <person name="Stiekema W."/>
            <person name="Entian K.-D."/>
            <person name="Terryn N."/>
            <person name="Harris B."/>
            <person name="Ansorge W."/>
            <person name="Brandt P."/>
            <person name="Grivell L.A."/>
            <person name="Rieger M."/>
            <person name="Weichselgartner M."/>
            <person name="de Simone V."/>
            <person name="Obermaier B."/>
            <person name="Mache R."/>
            <person name="Mueller M."/>
            <person name="Kreis M."/>
            <person name="Delseny M."/>
            <person name="Puigdomenech P."/>
            <person name="Watson M."/>
            <person name="Schmidtheini T."/>
            <person name="Reichert B."/>
            <person name="Portetelle D."/>
            <person name="Perez-Alonso M."/>
            <person name="Boutry M."/>
            <person name="Bancroft I."/>
            <person name="Vos P."/>
            <person name="Hoheisel J."/>
            <person name="Zimmermann W."/>
            <person name="Wedler H."/>
            <person name="Ridley P."/>
            <person name="Langham S.-A."/>
            <person name="McCullagh B."/>
            <person name="Bilham L."/>
            <person name="Robben J."/>
            <person name="van der Schueren J."/>
            <person name="Grymonprez B."/>
            <person name="Chuang Y.-J."/>
            <person name="Vandenbussche F."/>
            <person name="Braeken M."/>
            <person name="Weltjens I."/>
            <person name="Voet M."/>
            <person name="Bastiaens I."/>
            <person name="Aert R."/>
            <person name="Defoor E."/>
            <person name="Weitzenegger T."/>
            <person name="Bothe G."/>
            <person name="Ramsperger U."/>
            <person name="Hilbert H."/>
            <person name="Braun M."/>
            <person name="Holzer E."/>
            <person name="Brandt A."/>
            <person name="Peters S."/>
            <person name="van Staveren M."/>
            <person name="Dirkse W."/>
            <person name="Mooijman P."/>
            <person name="Klein Lankhorst R."/>
            <person name="Rose M."/>
            <person name="Hauf J."/>
            <person name="Koetter P."/>
            <person name="Berneiser S."/>
            <person name="Hempel S."/>
            <person name="Feldpausch M."/>
            <person name="Lamberth S."/>
            <person name="Van den Daele H."/>
            <person name="De Keyser A."/>
            <person name="Buysshaert C."/>
            <person name="Gielen J."/>
            <person name="Villarroel R."/>
            <person name="De Clercq R."/>
            <person name="van Montagu M."/>
            <person name="Rogers J."/>
            <person name="Cronin A."/>
            <person name="Quail M.A."/>
            <person name="Bray-Allen S."/>
            <person name="Clark L."/>
            <person name="Doggett J."/>
            <person name="Hall S."/>
            <person name="Kay M."/>
            <person name="Lennard N."/>
            <person name="McLay K."/>
            <person name="Mayes R."/>
            <person name="Pettett A."/>
            <person name="Rajandream M.A."/>
            <person name="Lyne M."/>
            <person name="Benes V."/>
            <person name="Rechmann S."/>
            <person name="Borkova D."/>
            <person name="Bloecker H."/>
            <person name="Scharfe M."/>
            <person name="Grimm M."/>
            <person name="Loehnert T.-H."/>
            <person name="Dose S."/>
            <person name="de Haan M."/>
            <person name="Maarse A.C."/>
            <person name="Schaefer M."/>
            <person name="Mueller-Auer S."/>
            <person name="Gabel C."/>
            <person name="Fuchs M."/>
            <person name="Fartmann B."/>
            <person name="Granderath K."/>
            <person name="Dauner D."/>
            <person name="Herzl A."/>
            <person name="Neumann S."/>
            <person name="Argiriou A."/>
            <person name="Vitale D."/>
            <person name="Liguori R."/>
            <person name="Piravandi E."/>
            <person name="Massenet O."/>
            <person name="Quigley F."/>
            <person name="Clabauld G."/>
            <person name="Muendlein A."/>
            <person name="Felber R."/>
            <person name="Schnabl S."/>
            <person name="Hiller R."/>
            <person name="Schmidt W."/>
            <person name="Lecharny A."/>
            <person name="Aubourg S."/>
            <person name="Chefdor F."/>
            <person name="Cooke R."/>
            <person name="Berger C."/>
            <person name="Monfort A."/>
            <person name="Casacuberta E."/>
            <person name="Gibbons T."/>
            <person name="Weber N."/>
            <person name="Vandenbol M."/>
            <person name="Bargues M."/>
            <person name="Terol J."/>
            <person name="Torres A."/>
            <person name="Perez-Perez A."/>
            <person name="Purnelle B."/>
            <person name="Bent E."/>
            <person name="Johnson S."/>
            <person name="Tacon D."/>
            <person name="Jesse T."/>
            <person name="Heijnen L."/>
            <person name="Schwarz S."/>
            <person name="Scholler P."/>
            <person name="Heber S."/>
            <person name="Francs P."/>
            <person name="Bielke C."/>
            <person name="Frishman D."/>
            <person name="Haase D."/>
            <person name="Lemcke K."/>
            <person name="Mewes H.-W."/>
            <person name="Stocker S."/>
            <person name="Zaccaria P."/>
            <person name="Bevan M."/>
            <person name="Wilson R.K."/>
            <person name="de la Bastide M."/>
            <person name="Habermann K."/>
            <person name="Parnell L."/>
            <person name="Dedhia N."/>
            <person name="Gnoj L."/>
            <person name="Schutz K."/>
            <person name="Huang E."/>
            <person name="Spiegel L."/>
            <person name="Sekhon M."/>
            <person name="Murray J."/>
            <person name="Sheet P."/>
            <person name="Cordes M."/>
            <person name="Abu-Threideh J."/>
            <person name="Stoneking T."/>
            <person name="Kalicki J."/>
            <person name="Graves T."/>
            <person name="Harmon G."/>
            <person name="Edwards J."/>
            <person name="Latreille P."/>
            <person name="Courtney L."/>
            <person name="Cloud J."/>
            <person name="Abbott A."/>
            <person name="Scott K."/>
            <person name="Johnson D."/>
            <person name="Minx P."/>
            <person name="Bentley D."/>
            <person name="Fulton B."/>
            <person name="Miller N."/>
            <person name="Greco T."/>
            <person name="Kemp K."/>
            <person name="Kramer J."/>
            <person name="Fulton L."/>
            <person name="Mardis E."/>
            <person name="Dante M."/>
            <person name="Pepin K."/>
            <person name="Hillier L.W."/>
            <person name="Nelson J."/>
            <person name="Spieth J."/>
            <person name="Ryan E."/>
            <person name="Andrews S."/>
            <person name="Geisel C."/>
            <person name="Layman D."/>
            <person name="Du H."/>
            <person name="Ali J."/>
            <person name="Berghoff A."/>
            <person name="Jones K."/>
            <person name="Drone K."/>
            <person name="Cotton M."/>
            <person name="Joshu C."/>
            <person name="Antonoiu B."/>
            <person name="Zidanic M."/>
            <person name="Strong C."/>
            <person name="Sun H."/>
            <person name="Lamar B."/>
            <person name="Yordan C."/>
            <person name="Ma P."/>
            <person name="Zhong J."/>
            <person name="Preston R."/>
            <person name="Vil D."/>
            <person name="Shekher M."/>
            <person name="Matero A."/>
            <person name="Shah R."/>
            <person name="Swaby I.K."/>
            <person name="O'Shaughnessy A."/>
            <person name="Rodriguez M."/>
            <person name="Hoffman J."/>
            <person name="Till S."/>
            <person name="Granat S."/>
            <person name="Shohdy N."/>
            <person name="Hasegawa A."/>
            <person name="Hameed A."/>
            <person name="Lodhi M."/>
            <person name="Johnson A."/>
            <person name="Chen E."/>
            <person name="Marra M.A."/>
            <person name="Martienssen R."/>
            <person name="McCombie W.R."/>
        </authorList>
    </citation>
    <scope>NUCLEOTIDE SEQUENCE [LARGE SCALE GENOMIC DNA]</scope>
    <source>
        <strain>cv. Columbia</strain>
    </source>
</reference>
<reference key="3">
    <citation type="journal article" date="2017" name="Plant J.">
        <title>Araport11: a complete reannotation of the Arabidopsis thaliana reference genome.</title>
        <authorList>
            <person name="Cheng C.Y."/>
            <person name="Krishnakumar V."/>
            <person name="Chan A.P."/>
            <person name="Thibaud-Nissen F."/>
            <person name="Schobel S."/>
            <person name="Town C.D."/>
        </authorList>
    </citation>
    <scope>GENOME REANNOTATION</scope>
    <source>
        <strain>cv. Columbia</strain>
    </source>
</reference>
<reference key="4">
    <citation type="submission" date="1998-08" db="EMBL/GenBank/DDBJ databases">
        <title>Signal peptide selection derived cDNAs from Arabidopsis thaliana leaves and guard cells.</title>
        <authorList>
            <person name="Stracke R."/>
            <person name="Palme K."/>
        </authorList>
    </citation>
    <scope>NUCLEOTIDE SEQUENCE [LARGE SCALE MRNA] OF 1-157</scope>
</reference>
<reference key="5">
    <citation type="submission" date="2006-07" db="EMBL/GenBank/DDBJ databases">
        <title>Large-scale analysis of RIKEN Arabidopsis full-length (RAFL) cDNAs.</title>
        <authorList>
            <person name="Totoki Y."/>
            <person name="Seki M."/>
            <person name="Ishida J."/>
            <person name="Nakajima M."/>
            <person name="Enju A."/>
            <person name="Kamiya A."/>
            <person name="Narusaka M."/>
            <person name="Shin-i T."/>
            <person name="Nakagawa M."/>
            <person name="Sakamoto N."/>
            <person name="Oishi K."/>
            <person name="Kohara Y."/>
            <person name="Kobayashi M."/>
            <person name="Toyoda A."/>
            <person name="Sakaki Y."/>
            <person name="Sakurai T."/>
            <person name="Iida K."/>
            <person name="Akiyama K."/>
            <person name="Satou M."/>
            <person name="Toyoda T."/>
            <person name="Konagaya A."/>
            <person name="Carninci P."/>
            <person name="Kawai J."/>
            <person name="Hayashizaki Y."/>
            <person name="Shinozaki K."/>
        </authorList>
    </citation>
    <scope>NUCLEOTIDE SEQUENCE [LARGE SCALE MRNA] OF 257-587</scope>
    <source>
        <strain>cv. Columbia</strain>
    </source>
</reference>
<reference key="6">
    <citation type="journal article" date="2004" name="Mol. Cell. Proteomics">
        <title>Identification of new intrinsic proteins in Arabidopsis plasma membrane proteome.</title>
        <authorList>
            <person name="Marmagne A."/>
            <person name="Rouet M.-A."/>
            <person name="Ferro M."/>
            <person name="Rolland N."/>
            <person name="Alcon C."/>
            <person name="Joyard J."/>
            <person name="Garin J."/>
            <person name="Barbier-Brygoo H."/>
            <person name="Ephritikhine G."/>
        </authorList>
    </citation>
    <scope>IDENTIFICATION BY MASS SPECTROMETRY</scope>
    <scope>SUBCELLULAR LOCATION [LARGE SCALE ANALYSIS]</scope>
</reference>
<name>SKU5_ARATH</name>